<sequence length="101" mass="11394">MQRLCVYVLIFALALAAFSEASWKPRSQQPDAPLGTGANRDLELPWLEQQGPASHHRRQLGPQGPPHLVADPSKKQGPWLEEEEEAYGWMDFGRRSAEDEN</sequence>
<evidence type="ECO:0000256" key="1">
    <source>
        <dbReference type="SAM" id="MobiDB-lite"/>
    </source>
</evidence>
<evidence type="ECO:0000269" key="2">
    <source>
    </source>
</evidence>
<evidence type="ECO:0000269" key="3">
    <source>
    </source>
</evidence>
<evidence type="ECO:0000269" key="4">
    <source>
    </source>
</evidence>
<evidence type="ECO:0000269" key="5">
    <source>
    </source>
</evidence>
<evidence type="ECO:0000269" key="6">
    <source>
    </source>
</evidence>
<evidence type="ECO:0000269" key="7">
    <source>
    </source>
</evidence>
<evidence type="ECO:0000269" key="8">
    <source>
    </source>
</evidence>
<evidence type="ECO:0000305" key="9"/>
<evidence type="ECO:0007829" key="10">
    <source>
        <dbReference type="PDB" id="7F8W"/>
    </source>
</evidence>
<comment type="function">
    <text>Gastrin stimulates the stomach mucosa to produce and secrete hydrochloric acid and the pancreas to secrete its digestive enzymes. It also stimulates smooth muscle contraction and increases blood circulation and water secretion in the stomach and intestine.</text>
</comment>
<comment type="interaction">
    <interactant intactId="EBI-3436637">
        <id>P01350</id>
    </interactant>
    <interactant intactId="EBI-13059134">
        <id>Q13520</id>
        <label>AQP6</label>
    </interactant>
    <organismsDiffer>false</organismsDiffer>
    <experiments>3</experiments>
</comment>
<comment type="interaction">
    <interactant intactId="EBI-3436637">
        <id>P01350</id>
    </interactant>
    <interactant intactId="EBI-17444777">
        <id>O43315</id>
        <label>AQP9</label>
    </interactant>
    <organismsDiffer>false</organismsDiffer>
    <experiments>3</experiments>
</comment>
<comment type="interaction">
    <interactant intactId="EBI-3436637">
        <id>P01350</id>
    </interactant>
    <interactant intactId="EBI-12092171">
        <id>Q12797-6</id>
        <label>ASPH</label>
    </interactant>
    <organismsDiffer>false</organismsDiffer>
    <experiments>3</experiments>
</comment>
<comment type="interaction">
    <interactant intactId="EBI-3436637">
        <id>P01350</id>
    </interactant>
    <interactant intactId="EBI-747430">
        <id>Q9BXK5</id>
        <label>BCL2L13</label>
    </interactant>
    <organismsDiffer>false</organismsDiffer>
    <experiments>3</experiments>
</comment>
<comment type="interaction">
    <interactant intactId="EBI-3436637">
        <id>P01350</id>
    </interactant>
    <interactant intactId="EBI-1045797">
        <id>Q8N5K1</id>
        <label>CISD2</label>
    </interactant>
    <organismsDiffer>false</organismsDiffer>
    <experiments>3</experiments>
</comment>
<comment type="interaction">
    <interactant intactId="EBI-3436637">
        <id>P01350</id>
    </interactant>
    <interactant intactId="EBI-6942903">
        <id>Q96BA8</id>
        <label>CREB3L1</label>
    </interactant>
    <organismsDiffer>false</organismsDiffer>
    <experiments>5</experiments>
</comment>
<comment type="interaction">
    <interactant intactId="EBI-3436637">
        <id>P01350</id>
    </interactant>
    <interactant intactId="EBI-1046040">
        <id>P00387</id>
        <label>CYB5R3</label>
    </interactant>
    <organismsDiffer>false</organismsDiffer>
    <experiments>3</experiments>
</comment>
<comment type="interaction">
    <interactant intactId="EBI-3436637">
        <id>P01350</id>
    </interactant>
    <interactant intactId="EBI-781551">
        <id>Q9Y282</id>
        <label>ERGIC3</label>
    </interactant>
    <organismsDiffer>false</organismsDiffer>
    <experiments>3</experiments>
</comment>
<comment type="interaction">
    <interactant intactId="EBI-3436637">
        <id>P01350</id>
    </interactant>
    <interactant intactId="EBI-18304435">
        <id>Q5JX71</id>
        <label>FAM209A</label>
    </interactant>
    <organismsDiffer>false</organismsDiffer>
    <experiments>3</experiments>
</comment>
<comment type="interaction">
    <interactant intactId="EBI-3436637">
        <id>P01350</id>
    </interactant>
    <interactant intactId="EBI-712073">
        <id>Q8NBJ4</id>
        <label>GOLM1</label>
    </interactant>
    <organismsDiffer>false</organismsDiffer>
    <experiments>3</experiments>
</comment>
<comment type="interaction">
    <interactant intactId="EBI-3436637">
        <id>P01350</id>
    </interactant>
    <interactant intactId="EBI-13345167">
        <id>Q8TDT2</id>
        <label>GPR152</label>
    </interactant>
    <organismsDiffer>false</organismsDiffer>
    <experiments>3</experiments>
</comment>
<comment type="interaction">
    <interactant intactId="EBI-3436637">
        <id>P01350</id>
    </interactant>
    <interactant intactId="EBI-8632435">
        <id>P43628</id>
        <label>KIR2DL3</label>
    </interactant>
    <organismsDiffer>false</organismsDiffer>
    <experiments>3</experiments>
</comment>
<comment type="interaction">
    <interactant intactId="EBI-3436637">
        <id>P01350</id>
    </interactant>
    <interactant intactId="EBI-1047093">
        <id>O76011</id>
        <label>KRT34</label>
    </interactant>
    <organismsDiffer>false</organismsDiffer>
    <experiments>3</experiments>
</comment>
<comment type="interaction">
    <interactant intactId="EBI-3436637">
        <id>P01350</id>
    </interactant>
    <interactant intactId="EBI-17566767">
        <id>Q6ZUX7</id>
        <label>LHFPL2</label>
    </interactant>
    <organismsDiffer>false</organismsDiffer>
    <experiments>3</experiments>
</comment>
<comment type="interaction">
    <interactant intactId="EBI-3436637">
        <id>P01350</id>
    </interactant>
    <interactant intactId="EBI-17873222">
        <id>Q15546</id>
        <label>MMD</label>
    </interactant>
    <organismsDiffer>false</organismsDiffer>
    <experiments>3</experiments>
</comment>
<comment type="interaction">
    <interactant intactId="EBI-3436637">
        <id>P01350</id>
    </interactant>
    <interactant intactId="EBI-17263240">
        <id>P15941-11</id>
        <label>MUC1</label>
    </interactant>
    <organismsDiffer>false</organismsDiffer>
    <experiments>3</experiments>
</comment>
<comment type="interaction">
    <interactant intactId="EBI-3436637">
        <id>P01350</id>
    </interactant>
    <interactant intactId="EBI-716063">
        <id>Q13113</id>
        <label>PDZK1IP1</label>
    </interactant>
    <organismsDiffer>false</organismsDiffer>
    <experiments>3</experiments>
</comment>
<comment type="interaction">
    <interactant intactId="EBI-3436637">
        <id>P01350</id>
    </interactant>
    <interactant intactId="EBI-12188331">
        <id>P60201-2</id>
        <label>PLP1</label>
    </interactant>
    <organismsDiffer>false</organismsDiffer>
    <experiments>3</experiments>
</comment>
<comment type="interaction">
    <interactant intactId="EBI-3436637">
        <id>P01350</id>
    </interactant>
    <interactant intactId="EBI-3923031">
        <id>Q14973</id>
        <label>SLC10A1</label>
    </interactant>
    <organismsDiffer>false</organismsDiffer>
    <experiments>3</experiments>
</comment>
<comment type="interaction">
    <interactant intactId="EBI-3436637">
        <id>P01350</id>
    </interactant>
    <interactant intactId="EBI-714319">
        <id>P02787</id>
        <label>TF</label>
    </interactant>
    <organismsDiffer>false</organismsDiffer>
    <experiments>5</experiments>
</comment>
<comment type="interaction">
    <interactant intactId="EBI-3436637">
        <id>P01350</id>
    </interactant>
    <interactant intactId="EBI-18178701">
        <id>Q4KMG9</id>
        <label>TMEM52B</label>
    </interactant>
    <organismsDiffer>false</organismsDiffer>
    <experiments>3</experiments>
</comment>
<comment type="subcellular location">
    <subcellularLocation>
        <location>Secreted</location>
    </subcellularLocation>
</comment>
<comment type="PTM">
    <text>Two different processing pathways probably exist in antral G-cells. In the dominant pathway progastrin is cleaved at three sites resulting in two major bioactive gastrins, gastrin-34 and gastrin-17. In the putative alternative pathway, progastrin may be processed only at the most C-terminal dibasic site resulting in the synthesis of gastrin-71.</text>
</comment>
<comment type="PTM">
    <text evidence="2 6 7">Sulfation enhances proteolytic processing, and blocks peptide degradation. Levels of sulfation differ between proteolytically-cleaved gastrins. Thus, gastrin-6 is almost 73% sulfated, whereas the larger gastrins are less than 50% sulfated. Sulfation levels are also tissue-specific.</text>
</comment>
<comment type="similarity">
    <text evidence="9">Belongs to the gastrin/cholecystokinin family.</text>
</comment>
<comment type="online information" name="Wikipedia">
    <link uri="https://en.wikipedia.org/wiki/Gastrin"/>
    <text>Gastrin entry</text>
</comment>
<comment type="online information" name="Atlas of Genetics and Cytogenetics in Oncology and Haematology">
    <link uri="https://atlasgeneticsoncology.org/gene/44214/GAST"/>
</comment>
<reference key="1">
    <citation type="journal article" date="1986" name="Gene">
        <title>Expression of human gastrin gene in normal and gastrinoma tissues.</title>
        <authorList>
            <person name="Kariya Y."/>
            <person name="Kato K."/>
            <person name="Hayashizaki Y."/>
            <person name="Himeno S."/>
            <person name="Tarui S."/>
            <person name="Matsubara K."/>
        </authorList>
    </citation>
    <scope>NUCLEOTIDE SEQUENCE [GENOMIC DNA]</scope>
</reference>
<reference key="2">
    <citation type="journal article" date="1984" name="Proc. Natl. Acad. Sci. U.S.A.">
        <title>Structural analysis of the gene encoding human gastrin: the large intron contains an Alu sequence.</title>
        <authorList>
            <person name="Ito R."/>
            <person name="Sato K."/>
            <person name="Helmer T."/>
            <person name="Jay G."/>
            <person name="Agarwal K.L."/>
        </authorList>
    </citation>
    <scope>NUCLEOTIDE SEQUENCE [GENOMIC DNA]</scope>
</reference>
<reference key="3">
    <citation type="journal article" date="1983" name="Nucleic Acids Res.">
        <title>Molecular cloning of the human gastrin gene.</title>
        <authorList>
            <person name="Kato K."/>
            <person name="Hayashizaki Y."/>
            <person name="Takahashi Y."/>
            <person name="Himeno S."/>
            <person name="Matsubara K."/>
        </authorList>
    </citation>
    <scope>NUCLEOTIDE SEQUENCE [GENOMIC DNA]</scope>
</reference>
<reference key="4">
    <citation type="journal article" date="1983" name="Proc. Natl. Acad. Sci. U.S.A.">
        <title>Molecular cloning of human gastrin cDNA: evidence for evolution of gastrin by gene duplication.</title>
        <authorList>
            <person name="Boel E."/>
            <person name="Vuust J."/>
            <person name="Norris F."/>
            <person name="Norris K."/>
            <person name="Wind A."/>
            <person name="Rehfeld J.F."/>
            <person name="Marcker K.A."/>
        </authorList>
    </citation>
    <scope>NUCLEOTIDE SEQUENCE [GENOMIC DNA]</scope>
</reference>
<reference key="5">
    <citation type="journal article" date="1984" name="Proc. Natl. Acad. Sci. U.S.A.">
        <title>Structure of a human gastrin gene.</title>
        <authorList>
            <person name="Wiborg O."/>
            <person name="Berglund L."/>
            <person name="Boel E."/>
            <person name="Norris F."/>
            <person name="Norris K."/>
            <person name="Rehfeld J.F."/>
            <person name="Marcker K.A."/>
            <person name="Vuust J."/>
        </authorList>
    </citation>
    <scope>NUCLEOTIDE SEQUENCE [GENOMIC DNA]</scope>
</reference>
<reference key="6">
    <citation type="journal article" date="1983" name="Gene">
        <title>Molecular cloning of human gastrin precursor cDNA.</title>
        <authorList>
            <person name="Kato K."/>
            <person name="Himeno S."/>
            <person name="Takahashi Y."/>
            <person name="Wakabayashi T."/>
            <person name="Tarui S."/>
            <person name="Matsubara K."/>
        </authorList>
    </citation>
    <scope>NUCLEOTIDE SEQUENCE [GENOMIC DNA]</scope>
</reference>
<reference key="7">
    <citation type="journal article" date="2004" name="Genome Res.">
        <title>The status, quality, and expansion of the NIH full-length cDNA project: the Mammalian Gene Collection (MGC).</title>
        <authorList>
            <consortium name="The MGC Project Team"/>
        </authorList>
    </citation>
    <scope>NUCLEOTIDE SEQUENCE [LARGE SCALE MRNA]</scope>
</reference>
<reference key="8">
    <citation type="journal article" date="1994" name="Eur. J. Biochem.">
        <title>Identification of gastrin component I as gastrin-71. The largest possible bioactive progastrin product.</title>
        <authorList>
            <person name="Rehfeld J.F."/>
            <person name="Johnsen A.H."/>
        </authorList>
    </citation>
    <scope>PROTEIN SEQUENCE OF 22-101</scope>
    <scope>CHARACTERIZATION OF GASTRIN 71</scope>
    <source>
        <tissue>Gastric mucosa</tissue>
    </source>
</reference>
<reference key="9">
    <citation type="journal article" date="1966" name="Nature">
        <title>Structures of human gastrins I and II.</title>
        <authorList>
            <person name="Bentley P.H."/>
            <person name="Kenner G.W."/>
            <person name="Sheppard R.C."/>
        </authorList>
    </citation>
    <scope>PROTEIN SEQUENCE OF 76-92</scope>
    <scope>PYROGLUTAMATE FORMATION AT GLN-76</scope>
    <scope>AMIDATION AT PHE-92</scope>
</reference>
<reference key="10">
    <citation type="journal article" date="1989" name="Biochem. Biophys. Res. Commun.">
        <title>Purification and structural determination of urinary NH2-terminal big gastrin fragments.</title>
        <authorList>
            <person name="Higashimoto Y."/>
            <person name="Himeno S."/>
            <person name="Shinomura Y."/>
            <person name="Nagao K."/>
            <person name="Tamura T."/>
            <person name="Tarui S."/>
        </authorList>
    </citation>
    <scope>PROTEIN SEQUENCE OF 59-68</scope>
    <scope>PYROGLUTAMATE FORMATION AT GLN-59</scope>
</reference>
<reference key="11">
    <citation type="journal article" date="1969" name="Gut">
        <title>Aminoacid constitution of two gastrins isolated from Zollinger-Ellison tumour tissue.</title>
        <authorList>
            <person name="Gregory R.A."/>
            <person name="Tracy H.J."/>
            <person name="Agarwal K.L."/>
            <person name="Grossman M.I."/>
        </authorList>
    </citation>
    <scope>PROTEIN SEQUENCE OF 76-92</scope>
</reference>
<reference key="12">
    <citation type="journal article" date="1988" name="Biochem. J.">
        <title>The human gastrin precursor. Characterization of phosphorylated forms and fragments.</title>
        <authorList>
            <person name="Varro A."/>
            <person name="Desmond H."/>
            <person name="Pauwels S."/>
            <person name="Gregory H."/>
            <person name="Young J."/>
            <person name="Dockray G.J."/>
        </authorList>
    </citation>
    <scope>PHOSPHORYLATION AT SER-96</scope>
</reference>
<reference key="13">
    <citation type="journal article" date="1995" name="EMBO J.">
        <title>Post-poly(Glu) cleavage and degradation modified by O-sulfated tyrosine: a novel post-translational processing mechanism.</title>
        <authorList>
            <person name="Rehfeld J.F."/>
            <person name="Hansen C.P."/>
            <person name="Johnsen A.H."/>
        </authorList>
    </citation>
    <scope>PROTEOLYTIC PROCESSING</scope>
    <scope>IDENTIFICATION BY MASS SPECTROMETRY</scope>
    <scope>SULFATION AT TYR-87</scope>
</reference>
<reference key="14">
    <citation type="journal article" date="1995" name="EMBO J.">
        <title>Tyrosine O-sulfation promotes proteolytic processing of progastrin.</title>
        <authorList>
            <person name="Bundgaard J.R."/>
            <person name="Vuust J."/>
            <person name="Rehfeld J.F."/>
        </authorList>
    </citation>
    <scope>SULFATION</scope>
    <scope>MUTAGENESIS OF ALA-86 AND TYR-87</scope>
    <scope>PROTEOLYTIC PROCESSING</scope>
</reference>
<reference key="15">
    <citation type="journal article" date="2000" name="Am. J. Physiol.">
        <title>Metabolism and acid secretory effect of sulfated and nonsulfated gastrin-6 in humans.</title>
        <authorList>
            <person name="Palnaes Hansen C."/>
            <person name="Stadil F."/>
            <person name="Rehfeld J.F."/>
        </authorList>
    </citation>
    <scope>PROTEOLYTIC PROCESSING</scope>
    <scope>SULFATION AT TYR-87</scope>
</reference>
<accession>P01350</accession>
<accession>P78463</accession>
<accession>P78464</accession>
<gene>
    <name type="primary">GAST</name>
    <name type="synonym">GAS</name>
</gene>
<proteinExistence type="evidence at protein level"/>
<organism>
    <name type="scientific">Homo sapiens</name>
    <name type="common">Human</name>
    <dbReference type="NCBI Taxonomy" id="9606"/>
    <lineage>
        <taxon>Eukaryota</taxon>
        <taxon>Metazoa</taxon>
        <taxon>Chordata</taxon>
        <taxon>Craniata</taxon>
        <taxon>Vertebrata</taxon>
        <taxon>Euteleostomi</taxon>
        <taxon>Mammalia</taxon>
        <taxon>Eutheria</taxon>
        <taxon>Euarchontoglires</taxon>
        <taxon>Primates</taxon>
        <taxon>Haplorrhini</taxon>
        <taxon>Catarrhini</taxon>
        <taxon>Hominidae</taxon>
        <taxon>Homo</taxon>
    </lineage>
</organism>
<dbReference type="EMBL" id="X00183">
    <property type="protein sequence ID" value="CAA25005.1"/>
    <property type="molecule type" value="Genomic_DNA"/>
</dbReference>
<dbReference type="EMBL" id="X00183">
    <property type="protein sequence ID" value="CAA25006.1"/>
    <property type="molecule type" value="Genomic_DNA"/>
</dbReference>
<dbReference type="EMBL" id="X00183">
    <property type="protein sequence ID" value="CAA25007.1"/>
    <property type="molecule type" value="Genomic_DNA"/>
</dbReference>
<dbReference type="EMBL" id="V00511">
    <property type="protein sequence ID" value="CAA23769.1"/>
    <property type="molecule type" value="mRNA"/>
</dbReference>
<dbReference type="EMBL" id="M15958">
    <property type="protein sequence ID" value="AAA52520.1"/>
    <property type="molecule type" value="Genomic_DNA"/>
</dbReference>
<dbReference type="EMBL" id="K01254">
    <property type="protein sequence ID" value="AAB59533.1"/>
    <property type="molecule type" value="Genomic_DNA"/>
</dbReference>
<dbReference type="EMBL" id="BC069724">
    <property type="protein sequence ID" value="AAH69724.1"/>
    <property type="molecule type" value="mRNA"/>
</dbReference>
<dbReference type="EMBL" id="BC069762">
    <property type="protein sequence ID" value="AAH69762.1"/>
    <property type="molecule type" value="mRNA"/>
</dbReference>
<dbReference type="CCDS" id="CCDS11404.1"/>
<dbReference type="PIR" id="A93997">
    <property type="entry name" value="GMHUB"/>
</dbReference>
<dbReference type="RefSeq" id="NP_000796.1">
    <property type="nucleotide sequence ID" value="NM_000805.5"/>
</dbReference>
<dbReference type="PDB" id="5WRJ">
    <property type="method" value="X-ray"/>
    <property type="resolution" value="2.31 A"/>
    <property type="chains" value="F/H/J/L=81-92"/>
</dbReference>
<dbReference type="PDB" id="7F8V">
    <property type="method" value="EM"/>
    <property type="resolution" value="3.30 A"/>
    <property type="chains" value="E=76-92"/>
</dbReference>
<dbReference type="PDB" id="7F8W">
    <property type="method" value="EM"/>
    <property type="resolution" value="3.10 A"/>
    <property type="chains" value="E=76-92"/>
</dbReference>
<dbReference type="PDB" id="7XOW">
    <property type="method" value="EM"/>
    <property type="resolution" value="3.10 A"/>
    <property type="chains" value="L=76-92"/>
</dbReference>
<dbReference type="PDBsum" id="5WRJ"/>
<dbReference type="PDBsum" id="7F8V"/>
<dbReference type="PDBsum" id="7F8W"/>
<dbReference type="PDBsum" id="7XOW"/>
<dbReference type="BMRB" id="P01350"/>
<dbReference type="EMDB" id="EMD-31493"/>
<dbReference type="EMDB" id="EMD-31494"/>
<dbReference type="EMDB" id="EMD-33361"/>
<dbReference type="SMR" id="P01350"/>
<dbReference type="BioGRID" id="108796">
    <property type="interactions" value="37"/>
</dbReference>
<dbReference type="DIP" id="DIP-403N"/>
<dbReference type="FunCoup" id="P01350">
    <property type="interactions" value="203"/>
</dbReference>
<dbReference type="IntAct" id="P01350">
    <property type="interactions" value="37"/>
</dbReference>
<dbReference type="MINT" id="P01350"/>
<dbReference type="STRING" id="9606.ENSP00000331358"/>
<dbReference type="DrugBank" id="DB12532">
    <property type="generic name" value="Oxetacaine"/>
</dbReference>
<dbReference type="GlyGen" id="P01350">
    <property type="glycosylation" value="1 site, 1 O-linked glycan (1 site)"/>
</dbReference>
<dbReference type="iPTMnet" id="P01350"/>
<dbReference type="PhosphoSitePlus" id="P01350"/>
<dbReference type="BioMuta" id="GAST"/>
<dbReference type="DMDM" id="120952"/>
<dbReference type="MassIVE" id="P01350"/>
<dbReference type="PaxDb" id="9606-ENSP00000331358"/>
<dbReference type="PeptideAtlas" id="P01350"/>
<dbReference type="ProteomicsDB" id="51377"/>
<dbReference type="Antibodypedia" id="3504">
    <property type="antibodies" value="495 antibodies from 36 providers"/>
</dbReference>
<dbReference type="DNASU" id="2520"/>
<dbReference type="Ensembl" id="ENST00000329402.4">
    <property type="protein sequence ID" value="ENSP00000331358.3"/>
    <property type="gene ID" value="ENSG00000184502.4"/>
</dbReference>
<dbReference type="GeneID" id="2520"/>
<dbReference type="KEGG" id="hsa:2520"/>
<dbReference type="MANE-Select" id="ENST00000329402.4">
    <property type="protein sequence ID" value="ENSP00000331358.3"/>
    <property type="RefSeq nucleotide sequence ID" value="NM_000805.5"/>
    <property type="RefSeq protein sequence ID" value="NP_000796.1"/>
</dbReference>
<dbReference type="UCSC" id="uc002hxl.3">
    <property type="organism name" value="human"/>
</dbReference>
<dbReference type="AGR" id="HGNC:4164"/>
<dbReference type="CTD" id="2520"/>
<dbReference type="DisGeNET" id="2520"/>
<dbReference type="GeneCards" id="GAST"/>
<dbReference type="HGNC" id="HGNC:4164">
    <property type="gene designation" value="GAST"/>
</dbReference>
<dbReference type="HPA" id="ENSG00000184502">
    <property type="expression patterns" value="Tissue enriched (stomach)"/>
</dbReference>
<dbReference type="MIM" id="137250">
    <property type="type" value="gene"/>
</dbReference>
<dbReference type="neXtProt" id="NX_P01350"/>
<dbReference type="OpenTargets" id="ENSG00000184502"/>
<dbReference type="PharmGKB" id="PA28577"/>
<dbReference type="VEuPathDB" id="HostDB:ENSG00000184502"/>
<dbReference type="eggNOG" id="ENOG502SA9S">
    <property type="taxonomic scope" value="Eukaryota"/>
</dbReference>
<dbReference type="GeneTree" id="ENSGT00390000014792"/>
<dbReference type="HOGENOM" id="CLU_2249245_0_0_1"/>
<dbReference type="InParanoid" id="P01350"/>
<dbReference type="OMA" id="WKPRSQL"/>
<dbReference type="OrthoDB" id="9924917at2759"/>
<dbReference type="PAN-GO" id="P01350">
    <property type="GO annotations" value="4 GO annotations based on evolutionary models"/>
</dbReference>
<dbReference type="PhylomeDB" id="P01350"/>
<dbReference type="TreeFam" id="TF336994"/>
<dbReference type="PathwayCommons" id="P01350"/>
<dbReference type="Reactome" id="R-HSA-416476">
    <property type="pathway name" value="G alpha (q) signalling events"/>
</dbReference>
<dbReference type="Reactome" id="R-HSA-881907">
    <property type="pathway name" value="Gastrin-CREB signalling pathway via PKC and MAPK"/>
</dbReference>
<dbReference type="SignaLink" id="P01350"/>
<dbReference type="SIGNOR" id="P01350"/>
<dbReference type="BioGRID-ORCS" id="2520">
    <property type="hits" value="17 hits in 1143 CRISPR screens"/>
</dbReference>
<dbReference type="ChiTaRS" id="GAST">
    <property type="organism name" value="human"/>
</dbReference>
<dbReference type="GeneWiki" id="Gastrin"/>
<dbReference type="GenomeRNAi" id="2520"/>
<dbReference type="Pharos" id="P01350">
    <property type="development level" value="Tbio"/>
</dbReference>
<dbReference type="PRO" id="PR:P01350"/>
<dbReference type="Proteomes" id="UP000005640">
    <property type="component" value="Chromosome 17"/>
</dbReference>
<dbReference type="RNAct" id="P01350">
    <property type="molecule type" value="protein"/>
</dbReference>
<dbReference type="Bgee" id="ENSG00000184502">
    <property type="expression patterns" value="Expressed in pylorus and 100 other cell types or tissues"/>
</dbReference>
<dbReference type="ExpressionAtlas" id="P01350">
    <property type="expression patterns" value="baseline and differential"/>
</dbReference>
<dbReference type="GO" id="GO:0005576">
    <property type="term" value="C:extracellular region"/>
    <property type="evidence" value="ECO:0000304"/>
    <property type="project" value="Reactome"/>
</dbReference>
<dbReference type="GO" id="GO:0005615">
    <property type="term" value="C:extracellular space"/>
    <property type="evidence" value="ECO:0000318"/>
    <property type="project" value="GO_Central"/>
</dbReference>
<dbReference type="GO" id="GO:0005179">
    <property type="term" value="F:hormone activity"/>
    <property type="evidence" value="ECO:0000318"/>
    <property type="project" value="GO_Central"/>
</dbReference>
<dbReference type="GO" id="GO:0007186">
    <property type="term" value="P:G protein-coupled receptor signaling pathway"/>
    <property type="evidence" value="ECO:0000318"/>
    <property type="project" value="GO_Central"/>
</dbReference>
<dbReference type="GO" id="GO:0032094">
    <property type="term" value="P:response to food"/>
    <property type="evidence" value="ECO:0000318"/>
    <property type="project" value="GO_Central"/>
</dbReference>
<dbReference type="GO" id="GO:0007165">
    <property type="term" value="P:signal transduction"/>
    <property type="evidence" value="ECO:0000303"/>
    <property type="project" value="ProtInc"/>
</dbReference>
<dbReference type="InterPro" id="IPR039236">
    <property type="entry name" value="GAST"/>
</dbReference>
<dbReference type="InterPro" id="IPR001651">
    <property type="entry name" value="Gastrin/CCK"/>
</dbReference>
<dbReference type="InterPro" id="IPR013152">
    <property type="entry name" value="Gastrin/cholecystokinin_CS"/>
</dbReference>
<dbReference type="PANTHER" id="PTHR19309">
    <property type="entry name" value="GASTRIN"/>
    <property type="match status" value="1"/>
</dbReference>
<dbReference type="PANTHER" id="PTHR19309:SF0">
    <property type="entry name" value="GASTRIN"/>
    <property type="match status" value="1"/>
</dbReference>
<dbReference type="Pfam" id="PF00918">
    <property type="entry name" value="Gastrin"/>
    <property type="match status" value="1"/>
</dbReference>
<dbReference type="SMART" id="SM00029">
    <property type="entry name" value="GASTRIN"/>
    <property type="match status" value="1"/>
</dbReference>
<dbReference type="PROSITE" id="PS00259">
    <property type="entry name" value="GASTRIN"/>
    <property type="match status" value="1"/>
</dbReference>
<protein>
    <recommendedName>
        <fullName>Gastrin</fullName>
    </recommendedName>
    <component>
        <recommendedName>
            <fullName>Gastrin-71</fullName>
        </recommendedName>
        <alternativeName>
            <fullName>Gastrin component I</fullName>
        </alternativeName>
    </component>
    <component>
        <recommendedName>
            <fullName>Gastrin-52</fullName>
            <shortName>G52</shortName>
        </recommendedName>
    </component>
    <component>
        <recommendedName>
            <fullName>Big gastrin</fullName>
        </recommendedName>
        <alternativeName>
            <fullName>Gastrin component II</fullName>
        </alternativeName>
        <alternativeName>
            <fullName>Gastrin-34</fullName>
            <shortName>G34</shortName>
        </alternativeName>
    </component>
    <component>
        <recommendedName>
            <fullName>Gastrin</fullName>
        </recommendedName>
        <alternativeName>
            <fullName>Gastrin component III</fullName>
        </alternativeName>
        <alternativeName>
            <fullName>Gastrin-17</fullName>
            <shortName>G17</shortName>
        </alternativeName>
    </component>
    <component>
        <recommendedName>
            <fullName>Gastrin-14</fullName>
            <shortName>G14</shortName>
        </recommendedName>
    </component>
    <component>
        <recommendedName>
            <fullName>Gastrin-6</fullName>
            <shortName>G6</shortName>
        </recommendedName>
    </component>
</protein>
<name>GAST_HUMAN</name>
<feature type="signal peptide" evidence="8">
    <location>
        <begin position="1"/>
        <end position="21"/>
    </location>
</feature>
<feature type="peptide" id="PRO_0000010633" description="Gastrin-71">
    <location>
        <begin position="22"/>
        <end position="92"/>
    </location>
</feature>
<feature type="peptide" id="PRO_0000010634" description="Gastrin-52">
    <location>
        <begin position="41"/>
        <end position="92"/>
    </location>
</feature>
<feature type="peptide" id="PRO_0000010635" description="Big gastrin">
    <location>
        <begin position="59"/>
        <end position="92"/>
    </location>
</feature>
<feature type="peptide" id="PRO_0000010636" description="Gastrin">
    <location>
        <begin position="76"/>
        <end position="92"/>
    </location>
</feature>
<feature type="peptide" id="PRO_0000010637" description="Gastrin-14">
    <location>
        <begin position="79"/>
        <end position="92"/>
    </location>
</feature>
<feature type="peptide" id="PRO_0000010638" description="Gastrin-6">
    <location>
        <begin position="87"/>
        <end position="92"/>
    </location>
</feature>
<feature type="propeptide" id="PRO_0000010639" description="Removed in mature form">
    <location>
        <begin position="96"/>
        <end position="101"/>
    </location>
</feature>
<feature type="region of interest" description="Disordered" evidence="1">
    <location>
        <begin position="22"/>
        <end position="82"/>
    </location>
</feature>
<feature type="site" description="Cleavage">
    <location>
        <begin position="40"/>
        <end position="41"/>
    </location>
</feature>
<feature type="site" description="Cleavage">
    <location>
        <begin position="58"/>
        <end position="59"/>
    </location>
</feature>
<feature type="site" description="Cleavage">
    <location>
        <begin position="75"/>
        <end position="76"/>
    </location>
</feature>
<feature type="site" description="Cleavage">
    <location>
        <begin position="95"/>
        <end position="96"/>
    </location>
</feature>
<feature type="modified residue" description="Pyrrolidone carboxylic acid; in form big gastrin" evidence="3">
    <location>
        <position position="59"/>
    </location>
</feature>
<feature type="modified residue" description="Pyrrolidone carboxylic acid; in form gastrin" evidence="5">
    <location>
        <position position="76"/>
    </location>
</feature>
<feature type="modified residue" description="Sulfotyrosine; partial" evidence="2 6">
    <location>
        <position position="87"/>
    </location>
</feature>
<feature type="modified residue" description="Phenylalanine amide" evidence="5">
    <location>
        <position position="92"/>
    </location>
</feature>
<feature type="modified residue" description="Phosphoserine" evidence="4">
    <location>
        <position position="96"/>
    </location>
</feature>
<feature type="sequence variant" id="VAR_049127" description="In dbSNP:rs34309618.">
    <original>R</original>
    <variation>P</variation>
    <location>
        <position position="3"/>
    </location>
</feature>
<feature type="mutagenesis site" description="Small increase in ratio of gastrin-17 versus gastrin-34 production. No change in ratio of gastrin-17 versus gastrin-34 production; when associated with F-87." evidence="7">
    <original>A</original>
    <variation>D</variation>
    <location>
        <position position="86"/>
    </location>
</feature>
<feature type="mutagenesis site" description="Small decrease in ratio of gastrin-17 versus gastrin-34 production. No change in ratio of gastrin-17 versus gastrin-34 production; when associated with D-86." evidence="7">
    <original>Y</original>
    <variation>F</variation>
    <location>
        <position position="87"/>
    </location>
</feature>
<feature type="strand" evidence="10">
    <location>
        <begin position="82"/>
        <end position="84"/>
    </location>
</feature>
<keyword id="KW-0002">3D-structure</keyword>
<keyword id="KW-0027">Amidation</keyword>
<keyword id="KW-0165">Cleavage on pair of basic residues</keyword>
<keyword id="KW-0903">Direct protein sequencing</keyword>
<keyword id="KW-0372">Hormone</keyword>
<keyword id="KW-0597">Phosphoprotein</keyword>
<keyword id="KW-1267">Proteomics identification</keyword>
<keyword id="KW-0873">Pyrrolidone carboxylic acid</keyword>
<keyword id="KW-1185">Reference proteome</keyword>
<keyword id="KW-0964">Secreted</keyword>
<keyword id="KW-0732">Signal</keyword>
<keyword id="KW-0765">Sulfation</keyword>